<dbReference type="EMBL" id="CP000903">
    <property type="protein sequence ID" value="ABY45680.1"/>
    <property type="molecule type" value="Genomic_DNA"/>
</dbReference>
<dbReference type="RefSeq" id="WP_002143437.1">
    <property type="nucleotide sequence ID" value="NC_010184.1"/>
</dbReference>
<dbReference type="KEGG" id="bwe:BcerKBAB4_4524"/>
<dbReference type="eggNOG" id="COG4848">
    <property type="taxonomic scope" value="Bacteria"/>
</dbReference>
<dbReference type="HOGENOM" id="CLU_085634_0_0_9"/>
<dbReference type="Proteomes" id="UP000002154">
    <property type="component" value="Chromosome"/>
</dbReference>
<dbReference type="HAMAP" id="MF_01548">
    <property type="entry name" value="UPF0354"/>
    <property type="match status" value="1"/>
</dbReference>
<dbReference type="InterPro" id="IPR010838">
    <property type="entry name" value="DUF1444"/>
</dbReference>
<dbReference type="NCBIfam" id="NF010189">
    <property type="entry name" value="PRK13668.1"/>
    <property type="match status" value="1"/>
</dbReference>
<dbReference type="Pfam" id="PF07285">
    <property type="entry name" value="DUF1444"/>
    <property type="match status" value="1"/>
</dbReference>
<dbReference type="PIRSF" id="PIRSF012562">
    <property type="entry name" value="UCP012562"/>
    <property type="match status" value="1"/>
</dbReference>
<reference key="1">
    <citation type="journal article" date="2008" name="Chem. Biol. Interact.">
        <title>Extending the Bacillus cereus group genomics to putative food-borne pathogens of different toxicity.</title>
        <authorList>
            <person name="Lapidus A."/>
            <person name="Goltsman E."/>
            <person name="Auger S."/>
            <person name="Galleron N."/>
            <person name="Segurens B."/>
            <person name="Dossat C."/>
            <person name="Land M.L."/>
            <person name="Broussolle V."/>
            <person name="Brillard J."/>
            <person name="Guinebretiere M.-H."/>
            <person name="Sanchis V."/>
            <person name="Nguen-the C."/>
            <person name="Lereclus D."/>
            <person name="Richardson P."/>
            <person name="Wincker P."/>
            <person name="Weissenbach J."/>
            <person name="Ehrlich S.D."/>
            <person name="Sorokin A."/>
        </authorList>
    </citation>
    <scope>NUCLEOTIDE SEQUENCE [LARGE SCALE GENOMIC DNA]</scope>
    <source>
        <strain>KBAB4</strain>
    </source>
</reference>
<accession>A9VKK3</accession>
<proteinExistence type="inferred from homology"/>
<sequence>MKMTSKKMKDELMKKLSRPEWDCHYDSEKEVLRIEQTDSKKGINVSLPGVVAKWEVNKEKAIEEVAYYVQEALIAMHKEENSMAKILPVIRSTSFPKQSEEGNPFIMTDHTAETRIYYALDSNKTYRLIDERLLQKLELTEEQVREMALFNARSLGYEFKQETVAGNTFYFLNTNDGYDASRILNESLLHSMREKISGDMVVAVPHQDVLIIADIVNEIGYDIIAQMTMKFFAEGHVPITSLSFVYEDGDFEPIFILAKNRKKTDGKEKG</sequence>
<evidence type="ECO:0000255" key="1">
    <source>
        <dbReference type="HAMAP-Rule" id="MF_01548"/>
    </source>
</evidence>
<organism>
    <name type="scientific">Bacillus mycoides (strain KBAB4)</name>
    <name type="common">Bacillus weihenstephanensis</name>
    <dbReference type="NCBI Taxonomy" id="315730"/>
    <lineage>
        <taxon>Bacteria</taxon>
        <taxon>Bacillati</taxon>
        <taxon>Bacillota</taxon>
        <taxon>Bacilli</taxon>
        <taxon>Bacillales</taxon>
        <taxon>Bacillaceae</taxon>
        <taxon>Bacillus</taxon>
        <taxon>Bacillus cereus group</taxon>
    </lineage>
</organism>
<feature type="chain" id="PRO_1000199611" description="UPF0354 protein BcerKBAB4_4524">
    <location>
        <begin position="1"/>
        <end position="270"/>
    </location>
</feature>
<name>Y4524_BACMK</name>
<gene>
    <name type="ordered locus">BcerKBAB4_4524</name>
</gene>
<comment type="similarity">
    <text evidence="1">Belongs to the UPF0354 family.</text>
</comment>
<protein>
    <recommendedName>
        <fullName evidence="1">UPF0354 protein BcerKBAB4_4524</fullName>
    </recommendedName>
</protein>